<accession>B1MHI6</accession>
<keyword id="KW-0521">NADP</keyword>
<keyword id="KW-0560">Oxidoreductase</keyword>
<keyword id="KW-0627">Porphyrin biosynthesis</keyword>
<keyword id="KW-1185">Reference proteome</keyword>
<dbReference type="EC" id="1.2.1.70" evidence="1"/>
<dbReference type="EMBL" id="CU458896">
    <property type="protein sequence ID" value="CAM64067.1"/>
    <property type="molecule type" value="Genomic_DNA"/>
</dbReference>
<dbReference type="RefSeq" id="WP_005061882.1">
    <property type="nucleotide sequence ID" value="NZ_MLCG01000001.1"/>
</dbReference>
<dbReference type="SMR" id="B1MHI6"/>
<dbReference type="GeneID" id="93380937"/>
<dbReference type="KEGG" id="mab:MAB_3993c"/>
<dbReference type="UniPathway" id="UPA00251">
    <property type="reaction ID" value="UER00316"/>
</dbReference>
<dbReference type="Proteomes" id="UP000007137">
    <property type="component" value="Chromosome"/>
</dbReference>
<dbReference type="GO" id="GO:0008883">
    <property type="term" value="F:glutamyl-tRNA reductase activity"/>
    <property type="evidence" value="ECO:0007669"/>
    <property type="project" value="UniProtKB-UniRule"/>
</dbReference>
<dbReference type="GO" id="GO:0050661">
    <property type="term" value="F:NADP binding"/>
    <property type="evidence" value="ECO:0007669"/>
    <property type="project" value="InterPro"/>
</dbReference>
<dbReference type="GO" id="GO:0019353">
    <property type="term" value="P:protoporphyrinogen IX biosynthetic process from glutamate"/>
    <property type="evidence" value="ECO:0007669"/>
    <property type="project" value="TreeGrafter"/>
</dbReference>
<dbReference type="CDD" id="cd05213">
    <property type="entry name" value="NAD_bind_Glutamyl_tRNA_reduct"/>
    <property type="match status" value="1"/>
</dbReference>
<dbReference type="FunFam" id="3.30.460.30:FF:000001">
    <property type="entry name" value="Glutamyl-tRNA reductase"/>
    <property type="match status" value="1"/>
</dbReference>
<dbReference type="Gene3D" id="3.30.460.30">
    <property type="entry name" value="Glutamyl-tRNA reductase, N-terminal domain"/>
    <property type="match status" value="1"/>
</dbReference>
<dbReference type="Gene3D" id="3.40.50.720">
    <property type="entry name" value="NAD(P)-binding Rossmann-like Domain"/>
    <property type="match status" value="1"/>
</dbReference>
<dbReference type="HAMAP" id="MF_00087">
    <property type="entry name" value="Glu_tRNA_reductase"/>
    <property type="match status" value="1"/>
</dbReference>
<dbReference type="InterPro" id="IPR000343">
    <property type="entry name" value="4pyrrol_synth_GluRdtase"/>
</dbReference>
<dbReference type="InterPro" id="IPR015896">
    <property type="entry name" value="4pyrrol_synth_GluRdtase_dimer"/>
</dbReference>
<dbReference type="InterPro" id="IPR015895">
    <property type="entry name" value="4pyrrol_synth_GluRdtase_N"/>
</dbReference>
<dbReference type="InterPro" id="IPR018214">
    <property type="entry name" value="GluRdtase_CS"/>
</dbReference>
<dbReference type="InterPro" id="IPR036453">
    <property type="entry name" value="GluRdtase_dimer_dom_sf"/>
</dbReference>
<dbReference type="InterPro" id="IPR036343">
    <property type="entry name" value="GluRdtase_N_sf"/>
</dbReference>
<dbReference type="InterPro" id="IPR036291">
    <property type="entry name" value="NAD(P)-bd_dom_sf"/>
</dbReference>
<dbReference type="InterPro" id="IPR006151">
    <property type="entry name" value="Shikm_DH/Glu-tRNA_Rdtase"/>
</dbReference>
<dbReference type="NCBIfam" id="TIGR01035">
    <property type="entry name" value="hemA"/>
    <property type="match status" value="1"/>
</dbReference>
<dbReference type="NCBIfam" id="NF000744">
    <property type="entry name" value="PRK00045.1-3"/>
    <property type="match status" value="1"/>
</dbReference>
<dbReference type="PANTHER" id="PTHR43013">
    <property type="entry name" value="GLUTAMYL-TRNA REDUCTASE"/>
    <property type="match status" value="1"/>
</dbReference>
<dbReference type="PANTHER" id="PTHR43013:SF1">
    <property type="entry name" value="GLUTAMYL-TRNA REDUCTASE"/>
    <property type="match status" value="1"/>
</dbReference>
<dbReference type="Pfam" id="PF00745">
    <property type="entry name" value="GlutR_dimer"/>
    <property type="match status" value="1"/>
</dbReference>
<dbReference type="Pfam" id="PF05201">
    <property type="entry name" value="GlutR_N"/>
    <property type="match status" value="1"/>
</dbReference>
<dbReference type="Pfam" id="PF01488">
    <property type="entry name" value="Shikimate_DH"/>
    <property type="match status" value="1"/>
</dbReference>
<dbReference type="PIRSF" id="PIRSF000445">
    <property type="entry name" value="4pyrrol_synth_GluRdtase"/>
    <property type="match status" value="1"/>
</dbReference>
<dbReference type="SUPFAM" id="SSF69742">
    <property type="entry name" value="Glutamyl tRNA-reductase catalytic, N-terminal domain"/>
    <property type="match status" value="1"/>
</dbReference>
<dbReference type="SUPFAM" id="SSF69075">
    <property type="entry name" value="Glutamyl tRNA-reductase dimerization domain"/>
    <property type="match status" value="1"/>
</dbReference>
<dbReference type="SUPFAM" id="SSF51735">
    <property type="entry name" value="NAD(P)-binding Rossmann-fold domains"/>
    <property type="match status" value="1"/>
</dbReference>
<dbReference type="PROSITE" id="PS00747">
    <property type="entry name" value="GLUTR"/>
    <property type="match status" value="1"/>
</dbReference>
<evidence type="ECO:0000255" key="1">
    <source>
        <dbReference type="HAMAP-Rule" id="MF_00087"/>
    </source>
</evidence>
<sequence length="443" mass="46794">MSVLLFGASHRSAPVPVLEKLAIGEADQPKIIEHILQSPLVTEVMVLSTCNRVEVYAVVEAFHGGLTVIGEAIARHAGMGMNELTKYAYVRYSEAAVEHLFAVASGLDSMVVGEQQVLGQVRNAYATAESHQAVGRVLHELSQSALRVGKRVHSETGIDAAGASVVSVALNLADNKLDGLPGRTAAVVGAGSMGSLATAQLIRAGIDNLWVVNRSAERARRLAATAREAGVNAQAITLDNLDQALAQADVVVSCTGAVRPVISLADVHHALEGGRQLVFCDLGMPRDVDPTVAGLPGVVVVDMERIQREPTARAAANDAGAARQIVNDEVARYLTGERMAEVTPTVTALRQRAAEVVEAELLRLDGRLPGLAGAERDEVAKTVRRVVDKLLHAPTVRVKQLASAPGGDSYAEALRELFELDPHTVEAVATAGELPLATKELHE</sequence>
<reference key="1">
    <citation type="journal article" date="2009" name="PLoS ONE">
        <title>Non mycobacterial virulence genes in the genome of the emerging pathogen Mycobacterium abscessus.</title>
        <authorList>
            <person name="Ripoll F."/>
            <person name="Pasek S."/>
            <person name="Schenowitz C."/>
            <person name="Dossat C."/>
            <person name="Barbe V."/>
            <person name="Rottman M."/>
            <person name="Macheras E."/>
            <person name="Heym B."/>
            <person name="Herrmann J.L."/>
            <person name="Daffe M."/>
            <person name="Brosch R."/>
            <person name="Risler J.L."/>
            <person name="Gaillard J.L."/>
        </authorList>
    </citation>
    <scope>NUCLEOTIDE SEQUENCE [LARGE SCALE GENOMIC DNA]</scope>
    <source>
        <strain>ATCC 19977 / DSM 44196 / CCUG 20993 / CIP 104536 / JCM 13569 / NCTC 13031 / TMC 1543 / L948</strain>
    </source>
</reference>
<organism>
    <name type="scientific">Mycobacteroides abscessus (strain ATCC 19977 / DSM 44196 / CCUG 20993 / CIP 104536 / JCM 13569 / NCTC 13031 / TMC 1543 / L948)</name>
    <name type="common">Mycobacterium abscessus</name>
    <dbReference type="NCBI Taxonomy" id="561007"/>
    <lineage>
        <taxon>Bacteria</taxon>
        <taxon>Bacillati</taxon>
        <taxon>Actinomycetota</taxon>
        <taxon>Actinomycetes</taxon>
        <taxon>Mycobacteriales</taxon>
        <taxon>Mycobacteriaceae</taxon>
        <taxon>Mycobacteroides</taxon>
        <taxon>Mycobacteroides abscessus</taxon>
    </lineage>
</organism>
<feature type="chain" id="PRO_1000093152" description="Glutamyl-tRNA reductase">
    <location>
        <begin position="1"/>
        <end position="443"/>
    </location>
</feature>
<feature type="active site" description="Nucleophile" evidence="1">
    <location>
        <position position="50"/>
    </location>
</feature>
<feature type="binding site" evidence="1">
    <location>
        <begin position="49"/>
        <end position="52"/>
    </location>
    <ligand>
        <name>substrate</name>
    </ligand>
</feature>
<feature type="binding site" evidence="1">
    <location>
        <position position="109"/>
    </location>
    <ligand>
        <name>substrate</name>
    </ligand>
</feature>
<feature type="binding site" evidence="1">
    <location>
        <begin position="114"/>
        <end position="116"/>
    </location>
    <ligand>
        <name>substrate</name>
    </ligand>
</feature>
<feature type="binding site" evidence="1">
    <location>
        <position position="120"/>
    </location>
    <ligand>
        <name>substrate</name>
    </ligand>
</feature>
<feature type="binding site" evidence="1">
    <location>
        <begin position="189"/>
        <end position="194"/>
    </location>
    <ligand>
        <name>NADP(+)</name>
        <dbReference type="ChEBI" id="CHEBI:58349"/>
    </ligand>
</feature>
<feature type="site" description="Important for activity" evidence="1">
    <location>
        <position position="99"/>
    </location>
</feature>
<gene>
    <name evidence="1" type="primary">hemA</name>
    <name type="ordered locus">MAB_3993c</name>
</gene>
<comment type="function">
    <text evidence="1">Catalyzes the NADPH-dependent reduction of glutamyl-tRNA(Glu) to glutamate 1-semialdehyde (GSA).</text>
</comment>
<comment type="catalytic activity">
    <reaction evidence="1">
        <text>(S)-4-amino-5-oxopentanoate + tRNA(Glu) + NADP(+) = L-glutamyl-tRNA(Glu) + NADPH + H(+)</text>
        <dbReference type="Rhea" id="RHEA:12344"/>
        <dbReference type="Rhea" id="RHEA-COMP:9663"/>
        <dbReference type="Rhea" id="RHEA-COMP:9680"/>
        <dbReference type="ChEBI" id="CHEBI:15378"/>
        <dbReference type="ChEBI" id="CHEBI:57501"/>
        <dbReference type="ChEBI" id="CHEBI:57783"/>
        <dbReference type="ChEBI" id="CHEBI:58349"/>
        <dbReference type="ChEBI" id="CHEBI:78442"/>
        <dbReference type="ChEBI" id="CHEBI:78520"/>
        <dbReference type="EC" id="1.2.1.70"/>
    </reaction>
</comment>
<comment type="pathway">
    <text evidence="1">Porphyrin-containing compound metabolism; protoporphyrin-IX biosynthesis; 5-aminolevulinate from L-glutamyl-tRNA(Glu): step 1/2.</text>
</comment>
<comment type="subunit">
    <text evidence="1">Homodimer.</text>
</comment>
<comment type="domain">
    <text evidence="1">Possesses an unusual extended V-shaped dimeric structure with each monomer consisting of three distinct domains arranged along a curved 'spinal' alpha-helix. The N-terminal catalytic domain specifically recognizes the glutamate moiety of the substrate. The second domain is the NADPH-binding domain, and the third C-terminal domain is responsible for dimerization.</text>
</comment>
<comment type="miscellaneous">
    <text evidence="1">During catalysis, the active site Cys acts as a nucleophile attacking the alpha-carbonyl group of tRNA-bound glutamate with the formation of a thioester intermediate between enzyme and glutamate, and the concomitant release of tRNA(Glu). The thioester intermediate is finally reduced by direct hydride transfer from NADPH, to form the product GSA.</text>
</comment>
<comment type="similarity">
    <text evidence="1">Belongs to the glutamyl-tRNA reductase family.</text>
</comment>
<name>HEM1_MYCA9</name>
<proteinExistence type="inferred from homology"/>
<protein>
    <recommendedName>
        <fullName evidence="1">Glutamyl-tRNA reductase</fullName>
        <shortName evidence="1">GluTR</shortName>
        <ecNumber evidence="1">1.2.1.70</ecNumber>
    </recommendedName>
</protein>